<keyword id="KW-0067">ATP-binding</keyword>
<keyword id="KW-0963">Cytoplasm</keyword>
<keyword id="KW-0227">DNA damage</keyword>
<keyword id="KW-0228">DNA excision</keyword>
<keyword id="KW-0234">DNA repair</keyword>
<keyword id="KW-0267">Excision nuclease</keyword>
<keyword id="KW-0547">Nucleotide-binding</keyword>
<keyword id="KW-0742">SOS response</keyword>
<protein>
    <recommendedName>
        <fullName evidence="1">UvrABC system protein B</fullName>
        <shortName evidence="1">Protein UvrB</shortName>
    </recommendedName>
    <alternativeName>
        <fullName evidence="1">Excinuclease ABC subunit B</fullName>
    </alternativeName>
</protein>
<gene>
    <name evidence="1" type="primary">uvrB</name>
    <name type="ordered locus">BF2620</name>
</gene>
<name>UVRB_BACFR</name>
<comment type="function">
    <text evidence="1">The UvrABC repair system catalyzes the recognition and processing of DNA lesions. A damage recognition complex composed of 2 UvrA and 2 UvrB subunits scans DNA for abnormalities. Upon binding of the UvrA(2)B(2) complex to a putative damaged site, the DNA wraps around one UvrB monomer. DNA wrap is dependent on ATP binding by UvrB and probably causes local melting of the DNA helix, facilitating insertion of UvrB beta-hairpin between the DNA strands. Then UvrB probes one DNA strand for the presence of a lesion. If a lesion is found the UvrA subunits dissociate and the UvrB-DNA preincision complex is formed. This complex is subsequently bound by UvrC and the second UvrB is released. If no lesion is found, the DNA wraps around the other UvrB subunit that will check the other stand for damage.</text>
</comment>
<comment type="subunit">
    <text evidence="1">Forms a heterotetramer with UvrA during the search for lesions. Interacts with UvrC in an incision complex.</text>
</comment>
<comment type="subcellular location">
    <subcellularLocation>
        <location evidence="1">Cytoplasm</location>
    </subcellularLocation>
</comment>
<comment type="domain">
    <text evidence="1">The beta-hairpin motif is involved in DNA binding.</text>
</comment>
<comment type="similarity">
    <text evidence="1">Belongs to the UvrB family.</text>
</comment>
<sequence>MNFELTSAYKPTGDQPEAIAQLTEGVLEGVPAQTLLGVTGSGKTFTIANVIANINKPTLILSHNKTLAAQLYSEFKGFFPNNAVEYYVSYYDYYQPEAYLPSSDTYIEKDLAINDEIDKLRLAATSALLSGRKDVVVVSSVSCIYGMGNPSDFYNNVIEIERGRTINRNVFLRRLVDSLYMRNDIELNRGNFRVKGDTVDIYLAYSDNLLRVTFWGDEIDGIEEVDPVSGVTIAPFEAYKIYPANLFMTTKEATLRAIHEIEDDLTKQVAYFESIGKEYEAKRLYERVTYDMEMIRELGHCSGIENYSRYFDGRAAGTRPYCLLDFFPDDFLIVIDESHVSVPQIRAMYGGDRARKINLVEYGFRLPAAMDNRPLKFEEFESMAKQVIYVSATPADYELVQSEGIVVEQVIRPTGLLDPVIEVRPSLNQIDDLMEEIQIRIEKEERILVTTLTKRMAEELTEYLLNNNVRCNYIHSDVDTLERVKIMDDLRQGVYDVLIGVNLLREGLDLPEVSLVAILDADKEGFLRSHRSLTQTAGRAARNVNGMVIMYADKITDSMRLTIDETNRRREKQLAYNEEHGITPQQIKKARNLSVFGNGAETEDTQKGTRAYVEPSSPNIAADPVVQYMSKTQLEKSMERTRKLMQEAAKKLEFIEAAQYRDELLKMEDLMKEKWPG</sequence>
<evidence type="ECO:0000255" key="1">
    <source>
        <dbReference type="HAMAP-Rule" id="MF_00204"/>
    </source>
</evidence>
<dbReference type="EMBL" id="AP006841">
    <property type="protein sequence ID" value="BAD49370.1"/>
    <property type="molecule type" value="Genomic_DNA"/>
</dbReference>
<dbReference type="RefSeq" id="WP_011202946.1">
    <property type="nucleotide sequence ID" value="NC_006347.1"/>
</dbReference>
<dbReference type="RefSeq" id="YP_099904.1">
    <property type="nucleotide sequence ID" value="NC_006347.1"/>
</dbReference>
<dbReference type="SMR" id="Q64T09"/>
<dbReference type="STRING" id="295405.BF2620"/>
<dbReference type="KEGG" id="bfr:BF2620"/>
<dbReference type="PATRIC" id="fig|295405.11.peg.2531"/>
<dbReference type="HOGENOM" id="CLU_009621_2_1_10"/>
<dbReference type="OrthoDB" id="9806651at2"/>
<dbReference type="Proteomes" id="UP000002197">
    <property type="component" value="Chromosome"/>
</dbReference>
<dbReference type="GO" id="GO:0005737">
    <property type="term" value="C:cytoplasm"/>
    <property type="evidence" value="ECO:0007669"/>
    <property type="project" value="UniProtKB-SubCell"/>
</dbReference>
<dbReference type="GO" id="GO:0009380">
    <property type="term" value="C:excinuclease repair complex"/>
    <property type="evidence" value="ECO:0007669"/>
    <property type="project" value="InterPro"/>
</dbReference>
<dbReference type="GO" id="GO:0005524">
    <property type="term" value="F:ATP binding"/>
    <property type="evidence" value="ECO:0007669"/>
    <property type="project" value="UniProtKB-UniRule"/>
</dbReference>
<dbReference type="GO" id="GO:0016887">
    <property type="term" value="F:ATP hydrolysis activity"/>
    <property type="evidence" value="ECO:0007669"/>
    <property type="project" value="InterPro"/>
</dbReference>
<dbReference type="GO" id="GO:0003677">
    <property type="term" value="F:DNA binding"/>
    <property type="evidence" value="ECO:0007669"/>
    <property type="project" value="UniProtKB-UniRule"/>
</dbReference>
<dbReference type="GO" id="GO:0009381">
    <property type="term" value="F:excinuclease ABC activity"/>
    <property type="evidence" value="ECO:0007669"/>
    <property type="project" value="UniProtKB-UniRule"/>
</dbReference>
<dbReference type="GO" id="GO:0006289">
    <property type="term" value="P:nucleotide-excision repair"/>
    <property type="evidence" value="ECO:0007669"/>
    <property type="project" value="UniProtKB-UniRule"/>
</dbReference>
<dbReference type="GO" id="GO:0009432">
    <property type="term" value="P:SOS response"/>
    <property type="evidence" value="ECO:0007669"/>
    <property type="project" value="UniProtKB-UniRule"/>
</dbReference>
<dbReference type="CDD" id="cd17916">
    <property type="entry name" value="DEXHc_UvrB"/>
    <property type="match status" value="1"/>
</dbReference>
<dbReference type="CDD" id="cd18790">
    <property type="entry name" value="SF2_C_UvrB"/>
    <property type="match status" value="1"/>
</dbReference>
<dbReference type="Gene3D" id="3.40.50.300">
    <property type="entry name" value="P-loop containing nucleotide triphosphate hydrolases"/>
    <property type="match status" value="3"/>
</dbReference>
<dbReference type="Gene3D" id="4.10.860.10">
    <property type="entry name" value="UVR domain"/>
    <property type="match status" value="1"/>
</dbReference>
<dbReference type="HAMAP" id="MF_00204">
    <property type="entry name" value="UvrB"/>
    <property type="match status" value="1"/>
</dbReference>
<dbReference type="InterPro" id="IPR006935">
    <property type="entry name" value="Helicase/UvrB_N"/>
</dbReference>
<dbReference type="InterPro" id="IPR014001">
    <property type="entry name" value="Helicase_ATP-bd"/>
</dbReference>
<dbReference type="InterPro" id="IPR001650">
    <property type="entry name" value="Helicase_C-like"/>
</dbReference>
<dbReference type="InterPro" id="IPR027417">
    <property type="entry name" value="P-loop_NTPase"/>
</dbReference>
<dbReference type="InterPro" id="IPR001943">
    <property type="entry name" value="UVR_dom"/>
</dbReference>
<dbReference type="InterPro" id="IPR036876">
    <property type="entry name" value="UVR_dom_sf"/>
</dbReference>
<dbReference type="InterPro" id="IPR004807">
    <property type="entry name" value="UvrB"/>
</dbReference>
<dbReference type="InterPro" id="IPR041471">
    <property type="entry name" value="UvrB_inter"/>
</dbReference>
<dbReference type="InterPro" id="IPR024759">
    <property type="entry name" value="UvrB_YAD/RRR_dom"/>
</dbReference>
<dbReference type="NCBIfam" id="NF003673">
    <property type="entry name" value="PRK05298.1"/>
    <property type="match status" value="1"/>
</dbReference>
<dbReference type="NCBIfam" id="TIGR00631">
    <property type="entry name" value="uvrb"/>
    <property type="match status" value="1"/>
</dbReference>
<dbReference type="PANTHER" id="PTHR24029">
    <property type="entry name" value="UVRABC SYSTEM PROTEIN B"/>
    <property type="match status" value="1"/>
</dbReference>
<dbReference type="PANTHER" id="PTHR24029:SF0">
    <property type="entry name" value="UVRABC SYSTEM PROTEIN B"/>
    <property type="match status" value="1"/>
</dbReference>
<dbReference type="Pfam" id="PF00271">
    <property type="entry name" value="Helicase_C"/>
    <property type="match status" value="1"/>
</dbReference>
<dbReference type="Pfam" id="PF04851">
    <property type="entry name" value="ResIII"/>
    <property type="match status" value="1"/>
</dbReference>
<dbReference type="Pfam" id="PF12344">
    <property type="entry name" value="UvrB"/>
    <property type="match status" value="1"/>
</dbReference>
<dbReference type="Pfam" id="PF17757">
    <property type="entry name" value="UvrB_inter"/>
    <property type="match status" value="1"/>
</dbReference>
<dbReference type="SMART" id="SM00487">
    <property type="entry name" value="DEXDc"/>
    <property type="match status" value="1"/>
</dbReference>
<dbReference type="SMART" id="SM00490">
    <property type="entry name" value="HELICc"/>
    <property type="match status" value="1"/>
</dbReference>
<dbReference type="SUPFAM" id="SSF46600">
    <property type="entry name" value="C-terminal UvrC-binding domain of UvrB"/>
    <property type="match status" value="1"/>
</dbReference>
<dbReference type="SUPFAM" id="SSF52540">
    <property type="entry name" value="P-loop containing nucleoside triphosphate hydrolases"/>
    <property type="match status" value="2"/>
</dbReference>
<dbReference type="PROSITE" id="PS51192">
    <property type="entry name" value="HELICASE_ATP_BIND_1"/>
    <property type="match status" value="1"/>
</dbReference>
<dbReference type="PROSITE" id="PS51194">
    <property type="entry name" value="HELICASE_CTER"/>
    <property type="match status" value="1"/>
</dbReference>
<dbReference type="PROSITE" id="PS50151">
    <property type="entry name" value="UVR"/>
    <property type="match status" value="1"/>
</dbReference>
<accession>Q64T09</accession>
<reference key="1">
    <citation type="journal article" date="2004" name="Proc. Natl. Acad. Sci. U.S.A.">
        <title>Genomic analysis of Bacteroides fragilis reveals extensive DNA inversions regulating cell surface adaptation.</title>
        <authorList>
            <person name="Kuwahara T."/>
            <person name="Yamashita A."/>
            <person name="Hirakawa H."/>
            <person name="Nakayama H."/>
            <person name="Toh H."/>
            <person name="Okada N."/>
            <person name="Kuhara S."/>
            <person name="Hattori M."/>
            <person name="Hayashi T."/>
            <person name="Ohnishi Y."/>
        </authorList>
    </citation>
    <scope>NUCLEOTIDE SEQUENCE [LARGE SCALE GENOMIC DNA]</scope>
    <source>
        <strain>YCH46</strain>
    </source>
</reference>
<organism>
    <name type="scientific">Bacteroides fragilis (strain YCH46)</name>
    <dbReference type="NCBI Taxonomy" id="295405"/>
    <lineage>
        <taxon>Bacteria</taxon>
        <taxon>Pseudomonadati</taxon>
        <taxon>Bacteroidota</taxon>
        <taxon>Bacteroidia</taxon>
        <taxon>Bacteroidales</taxon>
        <taxon>Bacteroidaceae</taxon>
        <taxon>Bacteroides</taxon>
    </lineage>
</organism>
<proteinExistence type="inferred from homology"/>
<feature type="chain" id="PRO_0000227286" description="UvrABC system protein B">
    <location>
        <begin position="1"/>
        <end position="677"/>
    </location>
</feature>
<feature type="domain" description="Helicase ATP-binding" evidence="1">
    <location>
        <begin position="24"/>
        <end position="412"/>
    </location>
</feature>
<feature type="domain" description="Helicase C-terminal" evidence="1">
    <location>
        <begin position="429"/>
        <end position="591"/>
    </location>
</feature>
<feature type="domain" description="UVR" evidence="1">
    <location>
        <begin position="635"/>
        <end position="670"/>
    </location>
</feature>
<feature type="short sequence motif" description="Beta-hairpin">
    <location>
        <begin position="90"/>
        <end position="113"/>
    </location>
</feature>
<feature type="binding site" evidence="1">
    <location>
        <begin position="37"/>
        <end position="44"/>
    </location>
    <ligand>
        <name>ATP</name>
        <dbReference type="ChEBI" id="CHEBI:30616"/>
    </ligand>
</feature>